<reference key="1">
    <citation type="journal article" date="2005" name="Science">
        <title>The transcriptional landscape of the mammalian genome.</title>
        <authorList>
            <person name="Carninci P."/>
            <person name="Kasukawa T."/>
            <person name="Katayama S."/>
            <person name="Gough J."/>
            <person name="Frith M.C."/>
            <person name="Maeda N."/>
            <person name="Oyama R."/>
            <person name="Ravasi T."/>
            <person name="Lenhard B."/>
            <person name="Wells C."/>
            <person name="Kodzius R."/>
            <person name="Shimokawa K."/>
            <person name="Bajic V.B."/>
            <person name="Brenner S.E."/>
            <person name="Batalov S."/>
            <person name="Forrest A.R."/>
            <person name="Zavolan M."/>
            <person name="Davis M.J."/>
            <person name="Wilming L.G."/>
            <person name="Aidinis V."/>
            <person name="Allen J.E."/>
            <person name="Ambesi-Impiombato A."/>
            <person name="Apweiler R."/>
            <person name="Aturaliya R.N."/>
            <person name="Bailey T.L."/>
            <person name="Bansal M."/>
            <person name="Baxter L."/>
            <person name="Beisel K.W."/>
            <person name="Bersano T."/>
            <person name="Bono H."/>
            <person name="Chalk A.M."/>
            <person name="Chiu K.P."/>
            <person name="Choudhary V."/>
            <person name="Christoffels A."/>
            <person name="Clutterbuck D.R."/>
            <person name="Crowe M.L."/>
            <person name="Dalla E."/>
            <person name="Dalrymple B.P."/>
            <person name="de Bono B."/>
            <person name="Della Gatta G."/>
            <person name="di Bernardo D."/>
            <person name="Down T."/>
            <person name="Engstrom P."/>
            <person name="Fagiolini M."/>
            <person name="Faulkner G."/>
            <person name="Fletcher C.F."/>
            <person name="Fukushima T."/>
            <person name="Furuno M."/>
            <person name="Futaki S."/>
            <person name="Gariboldi M."/>
            <person name="Georgii-Hemming P."/>
            <person name="Gingeras T.R."/>
            <person name="Gojobori T."/>
            <person name="Green R.E."/>
            <person name="Gustincich S."/>
            <person name="Harbers M."/>
            <person name="Hayashi Y."/>
            <person name="Hensch T.K."/>
            <person name="Hirokawa N."/>
            <person name="Hill D."/>
            <person name="Huminiecki L."/>
            <person name="Iacono M."/>
            <person name="Ikeo K."/>
            <person name="Iwama A."/>
            <person name="Ishikawa T."/>
            <person name="Jakt M."/>
            <person name="Kanapin A."/>
            <person name="Katoh M."/>
            <person name="Kawasawa Y."/>
            <person name="Kelso J."/>
            <person name="Kitamura H."/>
            <person name="Kitano H."/>
            <person name="Kollias G."/>
            <person name="Krishnan S.P."/>
            <person name="Kruger A."/>
            <person name="Kummerfeld S.K."/>
            <person name="Kurochkin I.V."/>
            <person name="Lareau L.F."/>
            <person name="Lazarevic D."/>
            <person name="Lipovich L."/>
            <person name="Liu J."/>
            <person name="Liuni S."/>
            <person name="McWilliam S."/>
            <person name="Madan Babu M."/>
            <person name="Madera M."/>
            <person name="Marchionni L."/>
            <person name="Matsuda H."/>
            <person name="Matsuzawa S."/>
            <person name="Miki H."/>
            <person name="Mignone F."/>
            <person name="Miyake S."/>
            <person name="Morris K."/>
            <person name="Mottagui-Tabar S."/>
            <person name="Mulder N."/>
            <person name="Nakano N."/>
            <person name="Nakauchi H."/>
            <person name="Ng P."/>
            <person name="Nilsson R."/>
            <person name="Nishiguchi S."/>
            <person name="Nishikawa S."/>
            <person name="Nori F."/>
            <person name="Ohara O."/>
            <person name="Okazaki Y."/>
            <person name="Orlando V."/>
            <person name="Pang K.C."/>
            <person name="Pavan W.J."/>
            <person name="Pavesi G."/>
            <person name="Pesole G."/>
            <person name="Petrovsky N."/>
            <person name="Piazza S."/>
            <person name="Reed J."/>
            <person name="Reid J.F."/>
            <person name="Ring B.Z."/>
            <person name="Ringwald M."/>
            <person name="Rost B."/>
            <person name="Ruan Y."/>
            <person name="Salzberg S.L."/>
            <person name="Sandelin A."/>
            <person name="Schneider C."/>
            <person name="Schoenbach C."/>
            <person name="Sekiguchi K."/>
            <person name="Semple C.A."/>
            <person name="Seno S."/>
            <person name="Sessa L."/>
            <person name="Sheng Y."/>
            <person name="Shibata Y."/>
            <person name="Shimada H."/>
            <person name="Shimada K."/>
            <person name="Silva D."/>
            <person name="Sinclair B."/>
            <person name="Sperling S."/>
            <person name="Stupka E."/>
            <person name="Sugiura K."/>
            <person name="Sultana R."/>
            <person name="Takenaka Y."/>
            <person name="Taki K."/>
            <person name="Tammoja K."/>
            <person name="Tan S.L."/>
            <person name="Tang S."/>
            <person name="Taylor M.S."/>
            <person name="Tegner J."/>
            <person name="Teichmann S.A."/>
            <person name="Ueda H.R."/>
            <person name="van Nimwegen E."/>
            <person name="Verardo R."/>
            <person name="Wei C.L."/>
            <person name="Yagi K."/>
            <person name="Yamanishi H."/>
            <person name="Zabarovsky E."/>
            <person name="Zhu S."/>
            <person name="Zimmer A."/>
            <person name="Hide W."/>
            <person name="Bult C."/>
            <person name="Grimmond S.M."/>
            <person name="Teasdale R.D."/>
            <person name="Liu E.T."/>
            <person name="Brusic V."/>
            <person name="Quackenbush J."/>
            <person name="Wahlestedt C."/>
            <person name="Mattick J.S."/>
            <person name="Hume D.A."/>
            <person name="Kai C."/>
            <person name="Sasaki D."/>
            <person name="Tomaru Y."/>
            <person name="Fukuda S."/>
            <person name="Kanamori-Katayama M."/>
            <person name="Suzuki M."/>
            <person name="Aoki J."/>
            <person name="Arakawa T."/>
            <person name="Iida J."/>
            <person name="Imamura K."/>
            <person name="Itoh M."/>
            <person name="Kato T."/>
            <person name="Kawaji H."/>
            <person name="Kawagashira N."/>
            <person name="Kawashima T."/>
            <person name="Kojima M."/>
            <person name="Kondo S."/>
            <person name="Konno H."/>
            <person name="Nakano K."/>
            <person name="Ninomiya N."/>
            <person name="Nishio T."/>
            <person name="Okada M."/>
            <person name="Plessy C."/>
            <person name="Shibata K."/>
            <person name="Shiraki T."/>
            <person name="Suzuki S."/>
            <person name="Tagami M."/>
            <person name="Waki K."/>
            <person name="Watahiki A."/>
            <person name="Okamura-Oho Y."/>
            <person name="Suzuki H."/>
            <person name="Kawai J."/>
            <person name="Hayashizaki Y."/>
        </authorList>
    </citation>
    <scope>NUCLEOTIDE SEQUENCE [LARGE SCALE MRNA]</scope>
    <source>
        <strain>C57BL/6J</strain>
        <tissue>Liver</tissue>
        <tissue>Testis</tissue>
    </source>
</reference>
<reference key="2">
    <citation type="journal article" date="2004" name="Genome Res.">
        <title>The status, quality, and expansion of the NIH full-length cDNA project: the Mammalian Gene Collection (MGC).</title>
        <authorList>
            <consortium name="The MGC Project Team"/>
        </authorList>
    </citation>
    <scope>NUCLEOTIDE SEQUENCE [LARGE SCALE MRNA]</scope>
    <source>
        <strain>FVB/N</strain>
        <tissue>Mammary tumor</tissue>
    </source>
</reference>
<reference key="3">
    <citation type="submission" date="2009-01" db="UniProtKB">
        <authorList>
            <person name="Lubec G."/>
            <person name="Sunyer B."/>
            <person name="Chen W.-Q."/>
        </authorList>
    </citation>
    <scope>PROTEIN SEQUENCE OF 226-248</scope>
    <scope>IDENTIFICATION BY MASS SPECTROMETRY</scope>
    <source>
        <strain>OF1</strain>
        <tissue>Hippocampus</tissue>
    </source>
</reference>
<reference key="4">
    <citation type="journal article" date="2004" name="Mol. Cell. Proteomics">
        <title>Phosphoproteomic analysis of the developing mouse brain.</title>
        <authorList>
            <person name="Ballif B.A."/>
            <person name="Villen J."/>
            <person name="Beausoleil S.A."/>
            <person name="Schwartz D."/>
            <person name="Gygi S.P."/>
        </authorList>
    </citation>
    <scope>PHOSPHORYLATION [LARGE SCALE ANALYSIS] AT SER-677 AND SER-680</scope>
    <scope>IDENTIFICATION BY MASS SPECTROMETRY [LARGE SCALE ANALYSIS]</scope>
    <source>
        <tissue>Embryonic brain</tissue>
    </source>
</reference>
<reference key="5">
    <citation type="journal article" date="2007" name="Proc. Natl. Acad. Sci. U.S.A.">
        <title>Large-scale phosphorylation analysis of mouse liver.</title>
        <authorList>
            <person name="Villen J."/>
            <person name="Beausoleil S.A."/>
            <person name="Gerber S.A."/>
            <person name="Gygi S.P."/>
        </authorList>
    </citation>
    <scope>PHOSPHORYLATION [LARGE SCALE ANALYSIS] AT SER-674; SER-677 AND SER-680</scope>
    <scope>IDENTIFICATION BY MASS SPECTROMETRY [LARGE SCALE ANALYSIS]</scope>
    <source>
        <tissue>Liver</tissue>
    </source>
</reference>
<reference key="6">
    <citation type="journal article" date="2009" name="J. Biol. Chem.">
        <title>Inhibition of SUV39H1 methyltransferase activity by DBC1.</title>
        <authorList>
            <person name="Li Z."/>
            <person name="Chen L."/>
            <person name="Kabra N."/>
            <person name="Wang C."/>
            <person name="Fang J."/>
            <person name="Chen J."/>
        </authorList>
    </citation>
    <scope>FUNCTION AS SUV39H1 INHIBITOR</scope>
    <scope>INTERACTION WITH SUV39H1</scope>
</reference>
<reference key="7">
    <citation type="journal article" date="2010" name="Cell">
        <title>A tissue-specific atlas of mouse protein phosphorylation and expression.</title>
        <authorList>
            <person name="Huttlin E.L."/>
            <person name="Jedrychowski M.P."/>
            <person name="Elias J.E."/>
            <person name="Goswami T."/>
            <person name="Rad R."/>
            <person name="Beausoleil S.A."/>
            <person name="Villen J."/>
            <person name="Haas W."/>
            <person name="Sowa M.E."/>
            <person name="Gygi S.P."/>
        </authorList>
    </citation>
    <scope>PHOSPHORYLATION [LARGE SCALE ANALYSIS] AT SER-612; SER-674; SER-677; SER-680; TYR-684 AND SER-686</scope>
    <scope>IDENTIFICATION BY MASS SPECTROMETRY [LARGE SCALE ANALYSIS]</scope>
    <source>
        <tissue>Brain</tissue>
        <tissue>Brown adipose tissue</tissue>
        <tissue>Heart</tissue>
        <tissue>Kidney</tissue>
        <tissue>Liver</tissue>
        <tissue>Lung</tissue>
        <tissue>Pancreas</tissue>
        <tissue>Spleen</tissue>
        <tissue>Testis</tissue>
    </source>
</reference>
<reference key="8">
    <citation type="journal article" date="2010" name="J. Biol. Chem.">
        <title>HDAC3 is negatively regulated by the nuclear protein DBC1.</title>
        <authorList>
            <person name="Chini C.C."/>
            <person name="Escande C."/>
            <person name="Nin V."/>
            <person name="Chini E.N."/>
        </authorList>
    </citation>
    <scope>FUNCTION</scope>
    <scope>INTERACTION WITH HDAC3; HDAC1 AND MEF2D</scope>
</reference>
<reference key="9">
    <citation type="journal article" date="2013" name="Biochem. J.">
        <title>DBC1 (Deleted in Breast Cancer 1) modulates the stability and function of the nuclear receptor Rev-erbalpha.</title>
        <authorList>
            <person name="Chini C.C."/>
            <person name="Escande C."/>
            <person name="Nin V."/>
            <person name="Chini E.N."/>
        </authorList>
    </citation>
    <scope>FUNCTION</scope>
    <scope>INTERACTION WITH NR1D1</scope>
</reference>
<reference key="10">
    <citation type="journal article" date="2014" name="J. Biol. Chem.">
        <title>Deleted in breast cancer 1 (DBC1) protein regulates hepatic gluconeogenesis.</title>
        <authorList>
            <person name="Nin V."/>
            <person name="Chini C.C."/>
            <person name="Escande C."/>
            <person name="Capellini V."/>
            <person name="Chini E.N."/>
        </authorList>
    </citation>
    <scope>FUNCTION</scope>
    <scope>DISRUPTION PHENOTYPE</scope>
</reference>
<reference key="11">
    <citation type="journal article" date="2015" name="Cell Rep.">
        <title>DBC1 functions as a tumor suppressor by regulating p53 stability.</title>
        <authorList>
            <person name="Qin B."/>
            <person name="Minter-Dykhouse K."/>
            <person name="Yu J."/>
            <person name="Zhang J."/>
            <person name="Liu T."/>
            <person name="Zhang H."/>
            <person name="Lee S."/>
            <person name="Kim J."/>
            <person name="Wang L."/>
            <person name="Lou Z."/>
        </authorList>
    </citation>
    <scope>FUNCTION</scope>
    <scope>INTERACTION WITH TP53</scope>
    <scope>DISRUPTION PHENOTYPE</scope>
</reference>
<reference key="12">
    <citation type="journal article" date="2021" name="Biochem. Cell Biol.">
        <title>Chromatin remodeling factor CECR2 forms tissue-specific complexes with CCAR2 and LUZP1.</title>
        <authorList>
            <person name="Niri F."/>
            <person name="Terpstra A.N."/>
            <person name="Lim K.R.Q."/>
            <person name="McDermid H.E."/>
        </authorList>
    </citation>
    <scope>INTERACTION WITH CECR2</scope>
    <scope>SUBCELLULAR LOCATION</scope>
</reference>
<dbReference type="EMBL" id="AK031472">
    <property type="protein sequence ID" value="BAC27420.1"/>
    <property type="status" value="ALT_INIT"/>
    <property type="molecule type" value="mRNA"/>
</dbReference>
<dbReference type="EMBL" id="AK050238">
    <property type="protein sequence ID" value="BAC34139.2"/>
    <property type="status" value="ALT_INIT"/>
    <property type="molecule type" value="mRNA"/>
</dbReference>
<dbReference type="EMBL" id="BC021475">
    <property type="protein sequence ID" value="AAH21475.2"/>
    <property type="molecule type" value="mRNA"/>
</dbReference>
<dbReference type="EMBL" id="BC025471">
    <property type="protein sequence ID" value="AAH25471.1"/>
    <property type="molecule type" value="mRNA"/>
</dbReference>
<dbReference type="EMBL" id="BC038346">
    <property type="protein sequence ID" value="AAH38346.1"/>
    <property type="molecule type" value="mRNA"/>
</dbReference>
<dbReference type="CCDS" id="CCDS49534.1"/>
<dbReference type="RefSeq" id="NP_666167.3">
    <property type="nucleotide sequence ID" value="NM_146055.3"/>
</dbReference>
<dbReference type="RefSeq" id="XP_006518959.1">
    <property type="nucleotide sequence ID" value="XM_006518896.5"/>
</dbReference>
<dbReference type="SMR" id="Q8VDP4"/>
<dbReference type="BioGRID" id="230123">
    <property type="interactions" value="21"/>
</dbReference>
<dbReference type="FunCoup" id="Q8VDP4">
    <property type="interactions" value="3933"/>
</dbReference>
<dbReference type="IntAct" id="Q8VDP4">
    <property type="interactions" value="10"/>
</dbReference>
<dbReference type="MINT" id="Q8VDP4"/>
<dbReference type="STRING" id="10090.ENSMUSP00000036924"/>
<dbReference type="GlyGen" id="Q8VDP4">
    <property type="glycosylation" value="2 sites, 1 O-linked glycan (1 site)"/>
</dbReference>
<dbReference type="iPTMnet" id="Q8VDP4"/>
<dbReference type="PhosphoSitePlus" id="Q8VDP4"/>
<dbReference type="SwissPalm" id="Q8VDP4"/>
<dbReference type="jPOST" id="Q8VDP4"/>
<dbReference type="PaxDb" id="10090-ENSMUSP00000036924"/>
<dbReference type="PeptideAtlas" id="Q8VDP4"/>
<dbReference type="ProteomicsDB" id="265360"/>
<dbReference type="Pumba" id="Q8VDP4"/>
<dbReference type="Antibodypedia" id="9629">
    <property type="antibodies" value="320 antibodies from 36 providers"/>
</dbReference>
<dbReference type="Ensembl" id="ENSMUST00000035612.7">
    <property type="protein sequence ID" value="ENSMUSP00000036924.6"/>
    <property type="gene ID" value="ENSMUSG00000033712.7"/>
</dbReference>
<dbReference type="GeneID" id="219158"/>
<dbReference type="KEGG" id="mmu:219158"/>
<dbReference type="UCSC" id="uc007unf.1">
    <property type="organism name" value="mouse"/>
</dbReference>
<dbReference type="AGR" id="MGI:2444228"/>
<dbReference type="CTD" id="57805"/>
<dbReference type="MGI" id="MGI:2444228">
    <property type="gene designation" value="Ccar2"/>
</dbReference>
<dbReference type="VEuPathDB" id="HostDB:ENSMUSG00000033712"/>
<dbReference type="eggNOG" id="KOG4246">
    <property type="taxonomic scope" value="Eukaryota"/>
</dbReference>
<dbReference type="GeneTree" id="ENSGT00530000063672"/>
<dbReference type="HOGENOM" id="CLU_008030_2_0_1"/>
<dbReference type="InParanoid" id="Q8VDP4"/>
<dbReference type="OMA" id="WDALCQQ"/>
<dbReference type="OrthoDB" id="21006at2759"/>
<dbReference type="PhylomeDB" id="Q8VDP4"/>
<dbReference type="TreeFam" id="TF316387"/>
<dbReference type="BioGRID-ORCS" id="219158">
    <property type="hits" value="2 hits in 77 CRISPR screens"/>
</dbReference>
<dbReference type="ChiTaRS" id="Ccar2">
    <property type="organism name" value="mouse"/>
</dbReference>
<dbReference type="PRO" id="PR:Q8VDP4"/>
<dbReference type="Proteomes" id="UP000000589">
    <property type="component" value="Chromosome 14"/>
</dbReference>
<dbReference type="RNAct" id="Q8VDP4">
    <property type="molecule type" value="protein"/>
</dbReference>
<dbReference type="Bgee" id="ENSMUSG00000033712">
    <property type="expression patterns" value="Expressed in dorsal pancreas and 235 other cell types or tissues"/>
</dbReference>
<dbReference type="GO" id="GO:0000785">
    <property type="term" value="C:chromatin"/>
    <property type="evidence" value="ECO:0000250"/>
    <property type="project" value="UniProtKB"/>
</dbReference>
<dbReference type="GO" id="GO:0005737">
    <property type="term" value="C:cytoplasm"/>
    <property type="evidence" value="ECO:0000250"/>
    <property type="project" value="UniProtKB"/>
</dbReference>
<dbReference type="GO" id="GO:0044609">
    <property type="term" value="C:DBIRD complex"/>
    <property type="evidence" value="ECO:0000250"/>
    <property type="project" value="UniProtKB"/>
</dbReference>
<dbReference type="GO" id="GO:0005759">
    <property type="term" value="C:mitochondrial matrix"/>
    <property type="evidence" value="ECO:0007669"/>
    <property type="project" value="Ensembl"/>
</dbReference>
<dbReference type="GO" id="GO:0005654">
    <property type="term" value="C:nucleoplasm"/>
    <property type="evidence" value="ECO:0007669"/>
    <property type="project" value="Ensembl"/>
</dbReference>
<dbReference type="GO" id="GO:0005634">
    <property type="term" value="C:nucleus"/>
    <property type="evidence" value="ECO:0000314"/>
    <property type="project" value="UniProtKB"/>
</dbReference>
<dbReference type="GO" id="GO:0005819">
    <property type="term" value="C:spindle"/>
    <property type="evidence" value="ECO:0000250"/>
    <property type="project" value="UniProtKB"/>
</dbReference>
<dbReference type="GO" id="GO:0004857">
    <property type="term" value="F:enzyme inhibitor activity"/>
    <property type="evidence" value="ECO:0000314"/>
    <property type="project" value="UniProtKB"/>
</dbReference>
<dbReference type="GO" id="GO:0000993">
    <property type="term" value="F:RNA polymerase II complex binding"/>
    <property type="evidence" value="ECO:0000250"/>
    <property type="project" value="UniProtKB"/>
</dbReference>
<dbReference type="GO" id="GO:0006974">
    <property type="term" value="P:DNA damage response"/>
    <property type="evidence" value="ECO:0007669"/>
    <property type="project" value="UniProtKB-KW"/>
</dbReference>
<dbReference type="GO" id="GO:0043653">
    <property type="term" value="P:mitochondrial fragmentation involved in apoptotic process"/>
    <property type="evidence" value="ECO:0007669"/>
    <property type="project" value="Ensembl"/>
</dbReference>
<dbReference type="GO" id="GO:0006397">
    <property type="term" value="P:mRNA processing"/>
    <property type="evidence" value="ECO:0007669"/>
    <property type="project" value="UniProtKB-KW"/>
</dbReference>
<dbReference type="GO" id="GO:0043086">
    <property type="term" value="P:negative regulation of catalytic activity"/>
    <property type="evidence" value="ECO:0000315"/>
    <property type="project" value="UniProtKB"/>
</dbReference>
<dbReference type="GO" id="GO:0030308">
    <property type="term" value="P:negative regulation of cell growth"/>
    <property type="evidence" value="ECO:0000250"/>
    <property type="project" value="UniProtKB"/>
</dbReference>
<dbReference type="GO" id="GO:0045892">
    <property type="term" value="P:negative regulation of DNA-templated transcription"/>
    <property type="evidence" value="ECO:0000250"/>
    <property type="project" value="UniProtKB"/>
</dbReference>
<dbReference type="GO" id="GO:1902230">
    <property type="term" value="P:negative regulation of intrinsic apoptotic signaling pathway in response to DNA damage"/>
    <property type="evidence" value="ECO:0000250"/>
    <property type="project" value="UniProtKB"/>
</dbReference>
<dbReference type="GO" id="GO:0032435">
    <property type="term" value="P:negative regulation of proteasomal ubiquitin-dependent protein catabolic process"/>
    <property type="evidence" value="ECO:0000250"/>
    <property type="project" value="UniProtKB"/>
</dbReference>
<dbReference type="GO" id="GO:0043065">
    <property type="term" value="P:positive regulation of apoptotic process"/>
    <property type="evidence" value="ECO:0000250"/>
    <property type="project" value="UniProtKB"/>
</dbReference>
<dbReference type="GO" id="GO:0090263">
    <property type="term" value="P:positive regulation of canonical Wnt signaling pathway"/>
    <property type="evidence" value="ECO:0000250"/>
    <property type="project" value="UniProtKB"/>
</dbReference>
<dbReference type="GO" id="GO:2000003">
    <property type="term" value="P:positive regulation of DNA damage checkpoint"/>
    <property type="evidence" value="ECO:0000250"/>
    <property type="project" value="UniProtKB"/>
</dbReference>
<dbReference type="GO" id="GO:0042752">
    <property type="term" value="P:regulation of circadian rhythm"/>
    <property type="evidence" value="ECO:0000315"/>
    <property type="project" value="UniProtKB"/>
</dbReference>
<dbReference type="GO" id="GO:0032784">
    <property type="term" value="P:regulation of DNA-templated transcription elongation"/>
    <property type="evidence" value="ECO:0000250"/>
    <property type="project" value="UniProtKB"/>
</dbReference>
<dbReference type="GO" id="GO:0031647">
    <property type="term" value="P:regulation of protein stability"/>
    <property type="evidence" value="ECO:0000250"/>
    <property type="project" value="UniProtKB"/>
</dbReference>
<dbReference type="GO" id="GO:0009411">
    <property type="term" value="P:response to UV"/>
    <property type="evidence" value="ECO:0000250"/>
    <property type="project" value="UniProtKB"/>
</dbReference>
<dbReference type="GO" id="GO:0048511">
    <property type="term" value="P:rhythmic process"/>
    <property type="evidence" value="ECO:0007669"/>
    <property type="project" value="UniProtKB-KW"/>
</dbReference>
<dbReference type="GO" id="GO:0008380">
    <property type="term" value="P:RNA splicing"/>
    <property type="evidence" value="ECO:0000250"/>
    <property type="project" value="UniProtKB"/>
</dbReference>
<dbReference type="GO" id="GO:0016055">
    <property type="term" value="P:Wnt signaling pathway"/>
    <property type="evidence" value="ECO:0007669"/>
    <property type="project" value="UniProtKB-KW"/>
</dbReference>
<dbReference type="InterPro" id="IPR045354">
    <property type="entry name" value="BURAN"/>
</dbReference>
<dbReference type="InterPro" id="IPR025224">
    <property type="entry name" value="CCAR1/CCAR2"/>
</dbReference>
<dbReference type="InterPro" id="IPR025954">
    <property type="entry name" value="DBC1/CARP1_inactive_NUDIX_dom"/>
</dbReference>
<dbReference type="InterPro" id="IPR011992">
    <property type="entry name" value="EF-hand-dom_pair"/>
</dbReference>
<dbReference type="InterPro" id="IPR045353">
    <property type="entry name" value="LAIKA"/>
</dbReference>
<dbReference type="InterPro" id="IPR025223">
    <property type="entry name" value="S1-like_RNA-bd_dom"/>
</dbReference>
<dbReference type="PANTHER" id="PTHR14304:SF12">
    <property type="entry name" value="CELL CYCLE AND APOPTOSIS REGULATOR PROTEIN 2"/>
    <property type="match status" value="1"/>
</dbReference>
<dbReference type="PANTHER" id="PTHR14304">
    <property type="entry name" value="CELL DIVISION CYCLE AND APOPTOSIS REGULATOR PROTEIN"/>
    <property type="match status" value="1"/>
</dbReference>
<dbReference type="Pfam" id="PF19257">
    <property type="entry name" value="BURAN"/>
    <property type="match status" value="1"/>
</dbReference>
<dbReference type="Pfam" id="PF14443">
    <property type="entry name" value="DBC1"/>
    <property type="match status" value="1"/>
</dbReference>
<dbReference type="Pfam" id="PF19256">
    <property type="entry name" value="LAIKA"/>
    <property type="match status" value="1"/>
</dbReference>
<dbReference type="Pfam" id="PF14444">
    <property type="entry name" value="S1-like"/>
    <property type="match status" value="1"/>
</dbReference>
<dbReference type="SMART" id="SM01122">
    <property type="entry name" value="DBC1"/>
    <property type="match status" value="1"/>
</dbReference>
<dbReference type="SUPFAM" id="SSF47473">
    <property type="entry name" value="EF-hand"/>
    <property type="match status" value="1"/>
</dbReference>
<dbReference type="SUPFAM" id="SSF90257">
    <property type="entry name" value="Myosin rod fragments"/>
    <property type="match status" value="1"/>
</dbReference>
<protein>
    <recommendedName>
        <fullName>Cell cycle and apoptosis regulator protein 2</fullName>
    </recommendedName>
    <alternativeName>
        <fullName>Cell division cycle and apoptosis regulator protein 2</fullName>
    </alternativeName>
</protein>
<sequence length="922" mass="103002">MSQFKRQRINPLPGGRNFSGAASTSLLGPPPGLLTPPVATDLSQNARHLQSGEKQRVFTGIVTSLHDYFGVVDEEVFFQLSVVKGRLPQLGEKVLVKAAYNPGQAVPWNAVKVQTLSNQPLLKSPAPPLLHVAALGQKQGILGAQPQLIFQPHRIPPLFPQKPLSLFQTSHTLHLSHLNRFPARGPHGRLDQGRSDDYDSKKRKQRAGGEPWGAKKPRHDLSPYRVHLTPYTVDSPTCDFLELQRRYRSLLVPSDFLSVHLSWLSAFPLGQPFSLHHPSRIQVSSEKEAAPDTGAEPSPEDSDPTYSSKVLLLSSPGLEEFYRCCMLFVDDMAEPRETPEHPLKQLKFLLGRKEEEAVLVGGEWSPSLDGLDPQADPQVLVRTAIRCAQAQTGIDLSTCTKWWRFAEFQYLQPGPPRQLHTVVVYLPDVWTIMPTLEEWEALCQQKATEAAPQPHEASGEAEATEQAPDVSEQADTSKQNTETMEATTQQDVDTDLPEAPPPPLEPAVMARPRCVNLSLYGIVEDRRPKERISFEVVVLAELFVEMLQRDFGYRIYKTLLSLPEKVVSPPEPEKEEAAKEDAVKEEEAVKEEAVKVSKDEVQNEGTAAESDSPLKEDGLLPKRPSSGGEEEEKARGEAAEDLCEMALDPDLLLLRDDGEDEFAGAKLEETEVRSVASNQSEMEYSSLQDMPKELDPSTVLPLDCLLAFVFFDANWCGYLHRRDLERVLLTLGIRLSAEQAKQLVSRVVAQNICQYRSLQYSRAEVLDDGLPEDVLFGNLDLLPPSGKSTKPGAAPTEHKGLVPHNGSLINVGSLLQRAEQQDSGRLYLENKIHTLELKLEESHNRFSATEVTNKTLAAEMQELRARLAEAEETARTAERQKNQLQRQMQDFRRRLTPLHLEMQRIVEKADSWVEKEEPTPSN</sequence>
<evidence type="ECO:0000250" key="1">
    <source>
        <dbReference type="UniProtKB" id="Q8N163"/>
    </source>
</evidence>
<evidence type="ECO:0000255" key="2"/>
<evidence type="ECO:0000256" key="3">
    <source>
        <dbReference type="SAM" id="MobiDB-lite"/>
    </source>
</evidence>
<evidence type="ECO:0000269" key="4">
    <source>
    </source>
</evidence>
<evidence type="ECO:0000269" key="5">
    <source>
    </source>
</evidence>
<evidence type="ECO:0000269" key="6">
    <source>
    </source>
</evidence>
<evidence type="ECO:0000269" key="7">
    <source>
    </source>
</evidence>
<evidence type="ECO:0000269" key="8">
    <source>
    </source>
</evidence>
<evidence type="ECO:0000269" key="9">
    <source>
    </source>
</evidence>
<evidence type="ECO:0000305" key="10"/>
<evidence type="ECO:0007744" key="11">
    <source>
    </source>
</evidence>
<evidence type="ECO:0007744" key="12">
    <source>
    </source>
</evidence>
<evidence type="ECO:0007744" key="13">
    <source>
    </source>
</evidence>
<gene>
    <name type="primary">Ccar2</name>
</gene>
<keyword id="KW-0007">Acetylation</keyword>
<keyword id="KW-0010">Activator</keyword>
<keyword id="KW-0053">Apoptosis</keyword>
<keyword id="KW-0090">Biological rhythms</keyword>
<keyword id="KW-0131">Cell cycle</keyword>
<keyword id="KW-0175">Coiled coil</keyword>
<keyword id="KW-0963">Cytoplasm</keyword>
<keyword id="KW-0206">Cytoskeleton</keyword>
<keyword id="KW-0903">Direct protein sequencing</keyword>
<keyword id="KW-0227">DNA damage</keyword>
<keyword id="KW-1017">Isopeptide bond</keyword>
<keyword id="KW-0481">Metalloenzyme inhibitor</keyword>
<keyword id="KW-0488">Methylation</keyword>
<keyword id="KW-0507">mRNA processing</keyword>
<keyword id="KW-0508">mRNA splicing</keyword>
<keyword id="KW-0539">Nucleus</keyword>
<keyword id="KW-0597">Phosphoprotein</keyword>
<keyword id="KW-1185">Reference proteome</keyword>
<keyword id="KW-0678">Repressor</keyword>
<keyword id="KW-0804">Transcription</keyword>
<keyword id="KW-0805">Transcription regulation</keyword>
<keyword id="KW-0043">Tumor suppressor</keyword>
<keyword id="KW-0832">Ubl conjugation</keyword>
<keyword id="KW-0879">Wnt signaling pathway</keyword>
<organism>
    <name type="scientific">Mus musculus</name>
    <name type="common">Mouse</name>
    <dbReference type="NCBI Taxonomy" id="10090"/>
    <lineage>
        <taxon>Eukaryota</taxon>
        <taxon>Metazoa</taxon>
        <taxon>Chordata</taxon>
        <taxon>Craniata</taxon>
        <taxon>Vertebrata</taxon>
        <taxon>Euteleostomi</taxon>
        <taxon>Mammalia</taxon>
        <taxon>Eutheria</taxon>
        <taxon>Euarchontoglires</taxon>
        <taxon>Glires</taxon>
        <taxon>Rodentia</taxon>
        <taxon>Myomorpha</taxon>
        <taxon>Muroidea</taxon>
        <taxon>Muridae</taxon>
        <taxon>Murinae</taxon>
        <taxon>Mus</taxon>
        <taxon>Mus</taxon>
    </lineage>
</organism>
<proteinExistence type="evidence at protein level"/>
<feature type="chain" id="PRO_0000050814" description="Cell cycle and apoptosis regulator protein 2">
    <location>
        <begin position="1"/>
        <end position="922"/>
    </location>
</feature>
<feature type="region of interest" description="Disordered" evidence="3">
    <location>
        <begin position="1"/>
        <end position="39"/>
    </location>
</feature>
<feature type="region of interest" description="Disordered" evidence="3">
    <location>
        <begin position="178"/>
        <end position="219"/>
    </location>
</feature>
<feature type="region of interest" description="Disordered" evidence="3">
    <location>
        <begin position="280"/>
        <end position="307"/>
    </location>
</feature>
<feature type="region of interest" description="Disordered" evidence="3">
    <location>
        <begin position="446"/>
        <end position="508"/>
    </location>
</feature>
<feature type="region of interest" description="Disordered" evidence="3">
    <location>
        <begin position="567"/>
        <end position="638"/>
    </location>
</feature>
<feature type="region of interest" description="Interaction with MCC" evidence="1">
    <location>
        <begin position="609"/>
        <end position="669"/>
    </location>
</feature>
<feature type="region of interest" description="Interaction with NR1D1" evidence="1">
    <location>
        <begin position="703"/>
        <end position="922"/>
    </location>
</feature>
<feature type="coiled-coil region" evidence="2">
    <location>
        <begin position="573"/>
        <end position="596"/>
    </location>
</feature>
<feature type="coiled-coil region" evidence="2">
    <location>
        <begin position="828"/>
        <end position="898"/>
    </location>
</feature>
<feature type="compositionally biased region" description="Basic and acidic residues" evidence="3">
    <location>
        <begin position="188"/>
        <end position="200"/>
    </location>
</feature>
<feature type="compositionally biased region" description="Polar residues" evidence="3">
    <location>
        <begin position="473"/>
        <end position="491"/>
    </location>
</feature>
<feature type="compositionally biased region" description="Basic and acidic residues" evidence="3">
    <location>
        <begin position="571"/>
        <end position="601"/>
    </location>
</feature>
<feature type="modified residue" description="Phosphothreonine" evidence="1">
    <location>
        <position position="35"/>
    </location>
</feature>
<feature type="modified residue" description="N6-acetyllysine; by KAT8" evidence="1">
    <location>
        <position position="112"/>
    </location>
</feature>
<feature type="modified residue" description="N6-methyllysine" evidence="1">
    <location>
        <position position="123"/>
    </location>
</feature>
<feature type="modified residue" description="Phosphoserine" evidence="1">
    <location>
        <position position="124"/>
    </location>
</feature>
<feature type="modified residue" description="Omega-N-methylarginine" evidence="1">
    <location>
        <position position="180"/>
    </location>
</feature>
<feature type="modified residue" description="N6-acetyllysine; by KAT8" evidence="1">
    <location>
        <position position="215"/>
    </location>
</feature>
<feature type="modified residue" description="Phosphothreonine" evidence="1">
    <location>
        <position position="483"/>
    </location>
</feature>
<feature type="modified residue" description="Phosphoserine" evidence="1">
    <location>
        <position position="568"/>
    </location>
</feature>
<feature type="modified residue" description="Phosphoserine" evidence="13">
    <location>
        <position position="612"/>
    </location>
</feature>
<feature type="modified residue" description="Phosphoserine" evidence="1">
    <location>
        <position position="626"/>
    </location>
</feature>
<feature type="modified residue" description="Phosphoserine" evidence="12 13">
    <location>
        <position position="674"/>
    </location>
</feature>
<feature type="modified residue" description="Phosphoserine" evidence="11 12 13">
    <location>
        <position position="677"/>
    </location>
</feature>
<feature type="modified residue" description="Phosphoserine" evidence="11 12 13">
    <location>
        <position position="680"/>
    </location>
</feature>
<feature type="modified residue" description="Phosphotyrosine" evidence="13">
    <location>
        <position position="684"/>
    </location>
</feature>
<feature type="modified residue" description="Phosphoserine" evidence="13">
    <location>
        <position position="686"/>
    </location>
</feature>
<feature type="modified residue" description="Phosphoserine" evidence="1">
    <location>
        <position position="807"/>
    </location>
</feature>
<feature type="modified residue" description="Phosphothreonine" evidence="1">
    <location>
        <position position="896"/>
    </location>
</feature>
<feature type="cross-link" description="Glycyl lysine isopeptide (Lys-Gly) (interchain with G-Cter in SUMO2 and SUMO3); alternate" evidence="1">
    <location>
        <position position="590"/>
    </location>
</feature>
<feature type="cross-link" description="Glycyl lysine isopeptide (Lys-Gly) (interchain with G-Cter in SUMO2); alternate" evidence="1">
    <location>
        <position position="590"/>
    </location>
</feature>
<feature type="sequence conflict" description="In Ref. 2; AAH25471." evidence="10" ref="2">
    <original>RPK</original>
    <variation>HAS</variation>
    <location>
        <begin position="527"/>
        <end position="529"/>
    </location>
</feature>
<feature type="sequence conflict" description="In Ref. 2; AAH38346." evidence="10" ref="2">
    <original>H</original>
    <variation>L</variation>
    <location>
        <position position="720"/>
    </location>
</feature>
<feature type="sequence conflict" description="In Ref. 1; BAC27420." evidence="10" ref="1">
    <original>G</original>
    <variation>R</variation>
    <location>
        <position position="812"/>
    </location>
</feature>
<name>CCAR2_MOUSE</name>
<accession>Q8VDP4</accession>
<accession>Q6PIB1</accession>
<accession>Q8BWR5</accession>
<accession>Q8C0F0</accession>
<accession>Q8R3G6</accession>
<comment type="function">
    <text evidence="1 4 5 6 7 8">Core component of the DBIRD complex, a multiprotein complex that acts at the interface between core mRNP particles and RNA polymerase II (RNAPII) and integrates transcript elongation with the regulation of alternative splicing: the DBIRD complex affects local transcript elongation rates and alternative splicing of a large set of exons embedded in (A + T)-rich DNA regions (By similarity). Inhibits SIRT1 deacetylase activity leading to increasing levels of p53/TP53 acetylation and p53-mediated apoptosis (By similarity). Inhibits SUV39H1 methyltransferase activity (PubMed:19218236). Mediates ligand-dependent transcriptional activation by nuclear hormone receptors (By similarity). Plays a critical role in maintaining genomic stability and cellular integrity following UV-induced genotoxic stress (By similarity). Regulates the circadian expression of the core clock components NR1D1 and BMAL1 (PubMed:23398316). Enhances the transcriptional repressor activity of NR1D1 through stabilization of NR1D1 protein levels by preventing its ubiquitination and subsequent degradation (PubMed:23398316). Represses the ligand-dependent transcriptional activation function of ESR2 (By similarity). Acts as a regulator of PCK1 expression and gluconeogenesis by a mechanism that involves, at least in part, both NR1D1 and SIRT1 (PubMed:24415752). Negatively regulates the deacetylase activity of HDAC3 and can alter its subcellular localization (PubMed:21030595). Positively regulates the beta-catenin pathway (canonical Wnt signaling pathway) and is required for MCC-mediated repression of the beta-catenin pathway (By similarity). Represses ligand-dependent transcriptional activation function of NR1H2 and NR1H3 and inhibits the interaction of SIRT1 with NR1H3 (By similarity). Plays an important role in tumor suppression through p53/TP53 regulation; stabilizes p53/TP53 by affecting its interaction with ubiquitin ligase MDM2 (PubMed:25732823). Represses the transcriptional activator activity of BRCA1 (By similarity). Inhibits SIRT1 in a CHEK2 and PSEM3-dependent manner and inhibits the activity of CHEK2 in vitro (By similarity).</text>
</comment>
<comment type="subunit">
    <text evidence="1 4 5 6 8 9">Component of the DBIRD complex (By similarity). Interacts with ZNF326/ZIRD; the interaction is direct (By similarity). Interacts (via N-terminus) with SIRT1, which inhibits the deacetylation of substrates (PubMed:21030595). Interacts (via N-terminus) with SUV39H1; this interaction abolishes the interaction with SIRT1 (PubMed:19218236). Component of a nuclear receptor-mediated transcription complex composed of at least ZNF335, CCAR2 and EMSY; the complex stimulates the transcription of nuclear receptor target genes such as SOX9 and HOXA1 (By similarity). Within the complex interacts with EMSY and interacts with ZNF335 (via C-terminus) (By similarity). Components of this complex may associate with components of a histone methylation complex to form a complex at least composed of ZNF335, HCFC1, CCAR2, EMSY, MKI67, RBBP5, ASH2L and WDR5 (By similarity). Within this complex, interacts with ASH2L (By similarity). Interacts with NR1D1 (PubMed:23398316). Interacts (via N-terminus) with ESR1 and ESR2 (By similarity). Interacts (via N-terminus) with HDAC3 (via C-terminus) (PubMed:21030595). Interacts with HDAC1 and MED2F (PubMed:21030595). Interacts with MCC (By similarity). Interacts (via N-terminus) with NR1H2 and NR1H3 in a ligand-independent manner (By similarity). Interacts with CSNK2A1 (By similarity). Interacts (via N-terminus) with p53/TP53 (PubMed:25732823). Interacts (via N-terminus) with BRCA1 (via the BRCT domains) (By similarity). Interacts (via N-terminus) with CHEK2 (via protein kinase domain) (By similarity). Interacts with PSEM3 (By similarity). Interacts (via N-terminus) with PSIA3 and SENP1 (By similarity). The sumoylated form shows a preferential interaction with SIRT1 as compared to its unmodified form (By similarity). Interacts with CECR2; may form part of the CERF-1 and/or CEF-5 ISWI chromatin remodeling complexes in embryonic stem cells (PubMed:34197713).</text>
</comment>
<comment type="subcellular location">
    <subcellularLocation>
        <location evidence="9">Nucleus</location>
    </subcellularLocation>
    <subcellularLocation>
        <location evidence="1">Cytoplasm</location>
    </subcellularLocation>
    <subcellularLocation>
        <location evidence="1">Cytoplasm</location>
        <location evidence="1">Cytoskeleton</location>
        <location evidence="1">Spindle</location>
    </subcellularLocation>
    <text evidence="1">Recruited to chromatin, post-UV irradiation. Sequestered to the cytoplasm in the presence of MCC. Translocated to the cytoplasm during UV-induced apoptosis.</text>
</comment>
<comment type="PTM">
    <text evidence="1">Acetylation at Lys-112 and Lys-215 by KAT8 prevents inhibitory binding to SIRT1 and increases its deacetylase activity.</text>
</comment>
<comment type="PTM">
    <text evidence="1">Genotoxic stress induces its sumoylation and sumoylation promotes the SIRT1-CCAR2 interaction which in turn inhibits SIRT1-mediated deacetylation of p53/TP53. Sumoylation leads to transcriptional activation of p53/TP53 by sequestering SIRT1 from p53/TP53. Desumoylated by SENP1.</text>
</comment>
<comment type="disruption phenotype">
    <text evidence="7 8">Mice mimic a fasted state and therefore, display an increased production of glucose. Display elevated levels of PCK1 and are glucose-intolerant in both a normal and a high-fat diet (PubMed:24415752). Mice develop more tumors including lymphomas, liver tumors, lung tumors (PubMed:25732823).</text>
</comment>
<comment type="sequence caution" evidence="10">
    <conflict type="erroneous initiation">
        <sequence resource="EMBL-CDS" id="BAC27420"/>
    </conflict>
    <text>Truncated N-terminus.</text>
</comment>
<comment type="sequence caution" evidence="10">
    <conflict type="erroneous initiation">
        <sequence resource="EMBL-CDS" id="BAC34139"/>
    </conflict>
    <text>Truncated N-terminus.</text>
</comment>